<feature type="chain" id="PRO_0000251455" description="Ribulose bisphosphate carboxylase large chain">
    <location>
        <begin position="1"/>
        <end position="473"/>
    </location>
</feature>
<feature type="active site" description="Proton acceptor" evidence="1">
    <location>
        <position position="168"/>
    </location>
</feature>
<feature type="active site" description="Proton acceptor" evidence="1">
    <location>
        <position position="287"/>
    </location>
</feature>
<feature type="binding site" description="in homodimeric partner" evidence="1">
    <location>
        <position position="116"/>
    </location>
    <ligand>
        <name>substrate</name>
    </ligand>
</feature>
<feature type="binding site" evidence="1">
    <location>
        <position position="166"/>
    </location>
    <ligand>
        <name>substrate</name>
    </ligand>
</feature>
<feature type="binding site" evidence="1">
    <location>
        <position position="170"/>
    </location>
    <ligand>
        <name>substrate</name>
    </ligand>
</feature>
<feature type="binding site" description="via carbamate group" evidence="1">
    <location>
        <position position="194"/>
    </location>
    <ligand>
        <name>Mg(2+)</name>
        <dbReference type="ChEBI" id="CHEBI:18420"/>
    </ligand>
</feature>
<feature type="binding site" evidence="1">
    <location>
        <position position="196"/>
    </location>
    <ligand>
        <name>Mg(2+)</name>
        <dbReference type="ChEBI" id="CHEBI:18420"/>
    </ligand>
</feature>
<feature type="binding site" evidence="1">
    <location>
        <position position="197"/>
    </location>
    <ligand>
        <name>Mg(2+)</name>
        <dbReference type="ChEBI" id="CHEBI:18420"/>
    </ligand>
</feature>
<feature type="binding site" evidence="1">
    <location>
        <position position="288"/>
    </location>
    <ligand>
        <name>substrate</name>
    </ligand>
</feature>
<feature type="binding site" evidence="1">
    <location>
        <position position="320"/>
    </location>
    <ligand>
        <name>substrate</name>
    </ligand>
</feature>
<feature type="binding site" evidence="1">
    <location>
        <position position="372"/>
    </location>
    <ligand>
        <name>substrate</name>
    </ligand>
</feature>
<feature type="site" description="Transition state stabilizer" evidence="1">
    <location>
        <position position="327"/>
    </location>
</feature>
<feature type="modified residue" description="N6-carboxylysine" evidence="1">
    <location>
        <position position="194"/>
    </location>
</feature>
<gene>
    <name evidence="1" type="primary">cbbL</name>
    <name type="ordered locus">Rmet_1501</name>
</gene>
<keyword id="KW-0113">Calvin cycle</keyword>
<keyword id="KW-0120">Carbon dioxide fixation</keyword>
<keyword id="KW-0456">Lyase</keyword>
<keyword id="KW-0460">Magnesium</keyword>
<keyword id="KW-0479">Metal-binding</keyword>
<keyword id="KW-0503">Monooxygenase</keyword>
<keyword id="KW-0560">Oxidoreductase</keyword>
<keyword id="KW-1185">Reference proteome</keyword>
<protein>
    <recommendedName>
        <fullName evidence="1">Ribulose bisphosphate carboxylase large chain</fullName>
        <shortName evidence="1">RuBisCO large subunit</shortName>
        <ecNumber evidence="1">4.1.1.39</ecNumber>
    </recommendedName>
</protein>
<proteinExistence type="inferred from homology"/>
<accession>Q1LN92</accession>
<name>RBL_CUPMC</name>
<comment type="function">
    <text evidence="1">RuBisCO catalyzes two reactions: the carboxylation of D-ribulose 1,5-bisphosphate, the primary event in carbon dioxide fixation, as well as the oxidative fragmentation of the pentose substrate. Both reactions occur simultaneously and in competition at the same active site.</text>
</comment>
<comment type="catalytic activity">
    <reaction evidence="1">
        <text>2 (2R)-3-phosphoglycerate + 2 H(+) = D-ribulose 1,5-bisphosphate + CO2 + H2O</text>
        <dbReference type="Rhea" id="RHEA:23124"/>
        <dbReference type="ChEBI" id="CHEBI:15377"/>
        <dbReference type="ChEBI" id="CHEBI:15378"/>
        <dbReference type="ChEBI" id="CHEBI:16526"/>
        <dbReference type="ChEBI" id="CHEBI:57870"/>
        <dbReference type="ChEBI" id="CHEBI:58272"/>
        <dbReference type="EC" id="4.1.1.39"/>
    </reaction>
</comment>
<comment type="catalytic activity">
    <reaction evidence="1">
        <text>D-ribulose 1,5-bisphosphate + O2 = 2-phosphoglycolate + (2R)-3-phosphoglycerate + 2 H(+)</text>
        <dbReference type="Rhea" id="RHEA:36631"/>
        <dbReference type="ChEBI" id="CHEBI:15378"/>
        <dbReference type="ChEBI" id="CHEBI:15379"/>
        <dbReference type="ChEBI" id="CHEBI:57870"/>
        <dbReference type="ChEBI" id="CHEBI:58033"/>
        <dbReference type="ChEBI" id="CHEBI:58272"/>
    </reaction>
</comment>
<comment type="cofactor">
    <cofactor evidence="1">
        <name>Mg(2+)</name>
        <dbReference type="ChEBI" id="CHEBI:18420"/>
    </cofactor>
    <text evidence="1">Binds 1 Mg(2+) ion per subunit.</text>
</comment>
<comment type="subunit">
    <text evidence="1">Heterohexadecamer of 8 large chains and 8 small chains.</text>
</comment>
<comment type="miscellaneous">
    <text evidence="1">The basic functional RuBisCO is composed of a large chain homodimer in a 'head-to-tail' conformation. In form I RuBisCO this homodimer is arranged in a barrel-like tetramer with the small subunits forming a tetrameric 'cap' on each end of the 'barrel'.</text>
</comment>
<comment type="similarity">
    <text evidence="1">Belongs to the RuBisCO large chain family. Type I subfamily.</text>
</comment>
<dbReference type="EC" id="4.1.1.39" evidence="1"/>
<dbReference type="EMBL" id="CP000352">
    <property type="protein sequence ID" value="ABF08384.1"/>
    <property type="molecule type" value="Genomic_DNA"/>
</dbReference>
<dbReference type="RefSeq" id="WP_011516247.1">
    <property type="nucleotide sequence ID" value="NC_007973.1"/>
</dbReference>
<dbReference type="SMR" id="Q1LN92"/>
<dbReference type="STRING" id="266264.Rmet_1501"/>
<dbReference type="KEGG" id="rme:Rmet_1501"/>
<dbReference type="eggNOG" id="COG1850">
    <property type="taxonomic scope" value="Bacteria"/>
</dbReference>
<dbReference type="HOGENOM" id="CLU_031450_2_0_4"/>
<dbReference type="Proteomes" id="UP000002429">
    <property type="component" value="Chromosome"/>
</dbReference>
<dbReference type="GO" id="GO:0000287">
    <property type="term" value="F:magnesium ion binding"/>
    <property type="evidence" value="ECO:0007669"/>
    <property type="project" value="UniProtKB-UniRule"/>
</dbReference>
<dbReference type="GO" id="GO:0004497">
    <property type="term" value="F:monooxygenase activity"/>
    <property type="evidence" value="ECO:0007669"/>
    <property type="project" value="UniProtKB-KW"/>
</dbReference>
<dbReference type="GO" id="GO:0016984">
    <property type="term" value="F:ribulose-bisphosphate carboxylase activity"/>
    <property type="evidence" value="ECO:0007669"/>
    <property type="project" value="UniProtKB-UniRule"/>
</dbReference>
<dbReference type="GO" id="GO:0019253">
    <property type="term" value="P:reductive pentose-phosphate cycle"/>
    <property type="evidence" value="ECO:0007669"/>
    <property type="project" value="UniProtKB-UniRule"/>
</dbReference>
<dbReference type="Gene3D" id="3.20.20.110">
    <property type="entry name" value="Ribulose bisphosphate carboxylase, large subunit, C-terminal domain"/>
    <property type="match status" value="1"/>
</dbReference>
<dbReference type="Gene3D" id="3.30.70.150">
    <property type="entry name" value="RuBisCO large subunit, N-terminal domain"/>
    <property type="match status" value="1"/>
</dbReference>
<dbReference type="HAMAP" id="MF_01338">
    <property type="entry name" value="RuBisCO_L_type1"/>
    <property type="match status" value="1"/>
</dbReference>
<dbReference type="InterPro" id="IPR033966">
    <property type="entry name" value="RuBisCO"/>
</dbReference>
<dbReference type="InterPro" id="IPR020878">
    <property type="entry name" value="RuBisCo_large_chain_AS"/>
</dbReference>
<dbReference type="InterPro" id="IPR000685">
    <property type="entry name" value="RuBisCO_lsu_C"/>
</dbReference>
<dbReference type="InterPro" id="IPR036376">
    <property type="entry name" value="RuBisCO_lsu_C_sf"/>
</dbReference>
<dbReference type="InterPro" id="IPR017443">
    <property type="entry name" value="RuBisCO_lsu_fd_N"/>
</dbReference>
<dbReference type="InterPro" id="IPR036422">
    <property type="entry name" value="RuBisCO_lsu_N_sf"/>
</dbReference>
<dbReference type="InterPro" id="IPR020888">
    <property type="entry name" value="RuBisCO_lsuI"/>
</dbReference>
<dbReference type="NCBIfam" id="NF003252">
    <property type="entry name" value="PRK04208.1"/>
    <property type="match status" value="1"/>
</dbReference>
<dbReference type="PANTHER" id="PTHR42704">
    <property type="entry name" value="RIBULOSE BISPHOSPHATE CARBOXYLASE"/>
    <property type="match status" value="1"/>
</dbReference>
<dbReference type="PANTHER" id="PTHR42704:SF17">
    <property type="entry name" value="RIBULOSE BISPHOSPHATE CARBOXYLASE LARGE CHAIN"/>
    <property type="match status" value="1"/>
</dbReference>
<dbReference type="Pfam" id="PF00016">
    <property type="entry name" value="RuBisCO_large"/>
    <property type="match status" value="1"/>
</dbReference>
<dbReference type="Pfam" id="PF02788">
    <property type="entry name" value="RuBisCO_large_N"/>
    <property type="match status" value="1"/>
</dbReference>
<dbReference type="SFLD" id="SFLDG01052">
    <property type="entry name" value="RuBisCO"/>
    <property type="match status" value="1"/>
</dbReference>
<dbReference type="SFLD" id="SFLDS00014">
    <property type="entry name" value="RuBisCO"/>
    <property type="match status" value="1"/>
</dbReference>
<dbReference type="SFLD" id="SFLDG00301">
    <property type="entry name" value="RuBisCO-like_proteins"/>
    <property type="match status" value="1"/>
</dbReference>
<dbReference type="SUPFAM" id="SSF51649">
    <property type="entry name" value="RuBisCo, C-terminal domain"/>
    <property type="match status" value="1"/>
</dbReference>
<dbReference type="SUPFAM" id="SSF54966">
    <property type="entry name" value="RuBisCO, large subunit, small (N-terminal) domain"/>
    <property type="match status" value="1"/>
</dbReference>
<dbReference type="PROSITE" id="PS00157">
    <property type="entry name" value="RUBISCO_LARGE"/>
    <property type="match status" value="1"/>
</dbReference>
<reference key="1">
    <citation type="journal article" date="2010" name="PLoS ONE">
        <title>The complete genome sequence of Cupriavidus metallidurans strain CH34, a master survivalist in harsh and anthropogenic environments.</title>
        <authorList>
            <person name="Janssen P.J."/>
            <person name="Van Houdt R."/>
            <person name="Moors H."/>
            <person name="Monsieurs P."/>
            <person name="Morin N."/>
            <person name="Michaux A."/>
            <person name="Benotmane M.A."/>
            <person name="Leys N."/>
            <person name="Vallaeys T."/>
            <person name="Lapidus A."/>
            <person name="Monchy S."/>
            <person name="Medigue C."/>
            <person name="Taghavi S."/>
            <person name="McCorkle S."/>
            <person name="Dunn J."/>
            <person name="van der Lelie D."/>
            <person name="Mergeay M."/>
        </authorList>
    </citation>
    <scope>NUCLEOTIDE SEQUENCE [LARGE SCALE GENOMIC DNA]</scope>
    <source>
        <strain>ATCC 43123 / DSM 2839 / NBRC 102507 / CH34</strain>
    </source>
</reference>
<evidence type="ECO:0000255" key="1">
    <source>
        <dbReference type="HAMAP-Rule" id="MF_01338"/>
    </source>
</evidence>
<sequence length="473" mass="52608">MAAKTYNAGVKEYRQTYWTPEYTPKDTDLLACFKVTPQPGVAREEVAAAVAAESSTGTWTTVWTDLLTDLDYYKGRAYRIEDVPGDDTCFYAFVAYPIDLFEEGSIVNVLTSLVGNVFGFKALRALRLEDVRFPIAYVMTCGGPPHGIQVERDIMNKYGRPLLGCTIKPKLGLSAKNYGRAVYECLRGGLDFTKDDENVNSQPFMRWKQRFDFVQEATEKAQRETGERKGHYLNVTAPTPEEMYKRAEYAKEIGAPIIMHDYLTGGFCANTGLANWCRDNGMLLHIHRAMHAVLDRNPHHGIHFRVLTKCLRLSGGDHLHSGTVVGKLEGDRDATLGWIDIMRDDFIKEDRSRGIMFDQDFGSMPGVMPVASGGIHVWHMPALVTIFGDDSVLQFGGGTLGHPWGNAAGAAANRVALEACVEARNKGVAVEKEGKSILTEAATHSPELKIAMETWKEIKFEFDTVDKLDVAHK</sequence>
<organism>
    <name type="scientific">Cupriavidus metallidurans (strain ATCC 43123 / DSM 2839 / NBRC 102507 / CH34)</name>
    <name type="common">Ralstonia metallidurans</name>
    <dbReference type="NCBI Taxonomy" id="266264"/>
    <lineage>
        <taxon>Bacteria</taxon>
        <taxon>Pseudomonadati</taxon>
        <taxon>Pseudomonadota</taxon>
        <taxon>Betaproteobacteria</taxon>
        <taxon>Burkholderiales</taxon>
        <taxon>Burkholderiaceae</taxon>
        <taxon>Cupriavidus</taxon>
    </lineage>
</organism>